<dbReference type="EMBL" id="BC105313">
    <property type="protein sequence ID" value="AAI05314.1"/>
    <property type="molecule type" value="mRNA"/>
</dbReference>
<dbReference type="RefSeq" id="NP_001040084.2">
    <property type="nucleotide sequence ID" value="NM_001046619.2"/>
</dbReference>
<dbReference type="SMR" id="Q2KJJ5"/>
<dbReference type="FunCoup" id="Q2KJJ5">
    <property type="interactions" value="2985"/>
</dbReference>
<dbReference type="STRING" id="9913.ENSBTAP00000060788"/>
<dbReference type="PaxDb" id="9913-ENSBTAP00000027147"/>
<dbReference type="GeneID" id="618429"/>
<dbReference type="KEGG" id="bta:618429"/>
<dbReference type="CTD" id="10607"/>
<dbReference type="eggNOG" id="KOG0319">
    <property type="taxonomic scope" value="Eukaryota"/>
</dbReference>
<dbReference type="InParanoid" id="Q2KJJ5"/>
<dbReference type="OrthoDB" id="5414888at2759"/>
<dbReference type="Proteomes" id="UP000009136">
    <property type="component" value="Unplaced"/>
</dbReference>
<dbReference type="GO" id="GO:0030686">
    <property type="term" value="C:90S preribosome"/>
    <property type="evidence" value="ECO:0000318"/>
    <property type="project" value="GO_Central"/>
</dbReference>
<dbReference type="GO" id="GO:0005730">
    <property type="term" value="C:nucleolus"/>
    <property type="evidence" value="ECO:0000318"/>
    <property type="project" value="GO_Central"/>
</dbReference>
<dbReference type="GO" id="GO:0032040">
    <property type="term" value="C:small-subunit processome"/>
    <property type="evidence" value="ECO:0000250"/>
    <property type="project" value="UniProtKB"/>
</dbReference>
<dbReference type="GO" id="GO:0034511">
    <property type="term" value="F:U3 snoRNA binding"/>
    <property type="evidence" value="ECO:0000318"/>
    <property type="project" value="GO_Central"/>
</dbReference>
<dbReference type="GO" id="GO:0000480">
    <property type="term" value="P:endonucleolytic cleavage in 5'-ETS of tricistronic rRNA transcript (SSU-rRNA, 5.8S rRNA, LSU-rRNA)"/>
    <property type="evidence" value="ECO:0000318"/>
    <property type="project" value="GO_Central"/>
</dbReference>
<dbReference type="GO" id="GO:0000472">
    <property type="term" value="P:endonucleolytic cleavage to generate mature 5'-end of SSU-rRNA from (SSU-rRNA, 5.8S rRNA, LSU-rRNA)"/>
    <property type="evidence" value="ECO:0000318"/>
    <property type="project" value="GO_Central"/>
</dbReference>
<dbReference type="GO" id="GO:0042274">
    <property type="term" value="P:ribosomal small subunit biogenesis"/>
    <property type="evidence" value="ECO:0000250"/>
    <property type="project" value="UniProtKB"/>
</dbReference>
<dbReference type="CDD" id="cd00200">
    <property type="entry name" value="WD40"/>
    <property type="match status" value="2"/>
</dbReference>
<dbReference type="FunFam" id="2.130.10.10:FF:000480">
    <property type="entry name" value="Transducin beta like 3"/>
    <property type="match status" value="1"/>
</dbReference>
<dbReference type="FunFam" id="2.130.10.10:FF:000230">
    <property type="entry name" value="Transducin beta-like protein 3"/>
    <property type="match status" value="1"/>
</dbReference>
<dbReference type="FunFam" id="2.130.10.10:FF:000605">
    <property type="entry name" value="Transducin beta-like protein 3"/>
    <property type="match status" value="1"/>
</dbReference>
<dbReference type="FunFam" id="2.130.10.10:FF:000795">
    <property type="entry name" value="Transducin beta-like protein 3"/>
    <property type="match status" value="1"/>
</dbReference>
<dbReference type="Gene3D" id="2.130.10.10">
    <property type="entry name" value="YVTN repeat-like/Quinoprotein amine dehydrogenase"/>
    <property type="match status" value="4"/>
</dbReference>
<dbReference type="InterPro" id="IPR020472">
    <property type="entry name" value="G-protein_beta_WD-40_rep"/>
</dbReference>
<dbReference type="InterPro" id="IPR013934">
    <property type="entry name" value="Utp13_C"/>
</dbReference>
<dbReference type="InterPro" id="IPR015943">
    <property type="entry name" value="WD40/YVTN_repeat-like_dom_sf"/>
</dbReference>
<dbReference type="InterPro" id="IPR019775">
    <property type="entry name" value="WD40_repeat_CS"/>
</dbReference>
<dbReference type="InterPro" id="IPR036322">
    <property type="entry name" value="WD40_repeat_dom_sf"/>
</dbReference>
<dbReference type="InterPro" id="IPR001680">
    <property type="entry name" value="WD40_rpt"/>
</dbReference>
<dbReference type="PANTHER" id="PTHR19854">
    <property type="entry name" value="TRANSDUCIN BETA-LIKE 3"/>
    <property type="match status" value="1"/>
</dbReference>
<dbReference type="PANTHER" id="PTHR19854:SF15">
    <property type="entry name" value="TRANSDUCIN BETA-LIKE PROTEIN 3"/>
    <property type="match status" value="1"/>
</dbReference>
<dbReference type="Pfam" id="PF08625">
    <property type="entry name" value="Utp13"/>
    <property type="match status" value="1"/>
</dbReference>
<dbReference type="Pfam" id="PF00400">
    <property type="entry name" value="WD40"/>
    <property type="match status" value="9"/>
</dbReference>
<dbReference type="PRINTS" id="PR00320">
    <property type="entry name" value="GPROTEINBRPT"/>
</dbReference>
<dbReference type="SMART" id="SM00320">
    <property type="entry name" value="WD40"/>
    <property type="match status" value="12"/>
</dbReference>
<dbReference type="SUPFAM" id="SSF50978">
    <property type="entry name" value="WD40 repeat-like"/>
    <property type="match status" value="2"/>
</dbReference>
<dbReference type="PROSITE" id="PS00678">
    <property type="entry name" value="WD_REPEATS_1"/>
    <property type="match status" value="2"/>
</dbReference>
<dbReference type="PROSITE" id="PS50082">
    <property type="entry name" value="WD_REPEATS_2"/>
    <property type="match status" value="8"/>
</dbReference>
<dbReference type="PROSITE" id="PS50294">
    <property type="entry name" value="WD_REPEATS_REGION"/>
    <property type="match status" value="1"/>
</dbReference>
<evidence type="ECO:0000250" key="1">
    <source>
        <dbReference type="UniProtKB" id="Q12788"/>
    </source>
</evidence>
<comment type="function">
    <text evidence="1">Part of the small subunit (SSU) processome, first precursor of the small eukaryotic ribosomal subunit. During the assembly of the SSU processome in the nucleolus, many ribosome biogenesis factors, an RNA chaperone and ribosomal proteins associate with the nascent pre-rRNA and work in concert to generate RNA folding, modifications, rearrangements and cleavage as well as targeted degradation of pre-ribosomal RNA by the RNA exosome.</text>
</comment>
<comment type="subunit">
    <text evidence="1">Part of the small subunit (SSU) processome, composed of more than 70 proteins and the RNA chaperone small nucleolar RNA (snoRNA) U3.</text>
</comment>
<comment type="subcellular location">
    <subcellularLocation>
        <location evidence="1">Nucleus</location>
        <location evidence="1">Nucleolus</location>
    </subcellularLocation>
</comment>
<accession>Q2KJJ5</accession>
<keyword id="KW-0007">Acetylation</keyword>
<keyword id="KW-1017">Isopeptide bond</keyword>
<keyword id="KW-0539">Nucleus</keyword>
<keyword id="KW-0597">Phosphoprotein</keyword>
<keyword id="KW-1185">Reference proteome</keyword>
<keyword id="KW-0677">Repeat</keyword>
<keyword id="KW-0832">Ubl conjugation</keyword>
<keyword id="KW-0853">WD repeat</keyword>
<proteinExistence type="evidence at transcript level"/>
<protein>
    <recommendedName>
        <fullName>Transducin beta-like protein 3</fullName>
    </recommendedName>
</protein>
<feature type="initiator methionine" description="Removed" evidence="1">
    <location>
        <position position="1"/>
    </location>
</feature>
<feature type="chain" id="PRO_0000362979" description="Transducin beta-like protein 3">
    <location>
        <begin position="2"/>
        <end position="800"/>
    </location>
</feature>
<feature type="repeat" description="WD 1">
    <location>
        <begin position="64"/>
        <end position="105"/>
    </location>
</feature>
<feature type="repeat" description="WD 2">
    <location>
        <begin position="107"/>
        <end position="146"/>
    </location>
</feature>
<feature type="repeat" description="WD 3">
    <location>
        <begin position="149"/>
        <end position="190"/>
    </location>
</feature>
<feature type="repeat" description="WD 4">
    <location>
        <begin position="193"/>
        <end position="232"/>
    </location>
</feature>
<feature type="repeat" description="WD 5">
    <location>
        <begin position="245"/>
        <end position="284"/>
    </location>
</feature>
<feature type="repeat" description="WD 6">
    <location>
        <begin position="290"/>
        <end position="329"/>
    </location>
</feature>
<feature type="repeat" description="WD 7">
    <location>
        <begin position="332"/>
        <end position="372"/>
    </location>
</feature>
<feature type="repeat" description="WD 8">
    <location>
        <begin position="374"/>
        <end position="413"/>
    </location>
</feature>
<feature type="repeat" description="WD 9">
    <location>
        <begin position="419"/>
        <end position="459"/>
    </location>
</feature>
<feature type="repeat" description="WD 10">
    <location>
        <begin position="477"/>
        <end position="516"/>
    </location>
</feature>
<feature type="repeat" description="WD 11">
    <location>
        <begin position="519"/>
        <end position="560"/>
    </location>
</feature>
<feature type="repeat" description="WD 12">
    <location>
        <begin position="562"/>
        <end position="602"/>
    </location>
</feature>
<feature type="repeat" description="WD 13">
    <location>
        <begin position="604"/>
        <end position="642"/>
    </location>
</feature>
<feature type="modified residue" description="N-acetylalanine" evidence="1">
    <location>
        <position position="2"/>
    </location>
</feature>
<feature type="modified residue" description="Phosphoserine" evidence="1">
    <location>
        <position position="257"/>
    </location>
</feature>
<feature type="cross-link" description="Glycyl lysine isopeptide (Lys-Gly) (interchain with G-Cter in SUMO2)" evidence="1">
    <location>
        <position position="407"/>
    </location>
</feature>
<name>TBL3_BOVIN</name>
<organism>
    <name type="scientific">Bos taurus</name>
    <name type="common">Bovine</name>
    <dbReference type="NCBI Taxonomy" id="9913"/>
    <lineage>
        <taxon>Eukaryota</taxon>
        <taxon>Metazoa</taxon>
        <taxon>Chordata</taxon>
        <taxon>Craniata</taxon>
        <taxon>Vertebrata</taxon>
        <taxon>Euteleostomi</taxon>
        <taxon>Mammalia</taxon>
        <taxon>Eutheria</taxon>
        <taxon>Laurasiatheria</taxon>
        <taxon>Artiodactyla</taxon>
        <taxon>Ruminantia</taxon>
        <taxon>Pecora</taxon>
        <taxon>Bovidae</taxon>
        <taxon>Bovinae</taxon>
        <taxon>Bos</taxon>
    </lineage>
</organism>
<reference key="1">
    <citation type="submission" date="2005-09" db="EMBL/GenBank/DDBJ databases">
        <authorList>
            <consortium name="NIH - Mammalian Gene Collection (MGC) project"/>
        </authorList>
    </citation>
    <scope>NUCLEOTIDE SEQUENCE [LARGE SCALE MRNA]</scope>
    <source>
        <strain>Crossbred X Angus</strain>
        <tissue>Ileum</tissue>
    </source>
</reference>
<sequence>MAEVAAGVGRFKSNYAVERKIEPFYKGGKVQLDQTGQHLFCVCGTRVNILDVASGAVLRSLEQEDQEDITAFDLSPDDKVLVTASRALLLAQWAWQEGSVTRLWKAIHTAPVATMAFDPTSTLLATGGCDGAVRVWDVVRCYGTHHFRGSPGVVHLVAFHPDPARLLLFSSAADTSIRVWSLQERSCLAVLTAHYSAVTSLTFSADGHTMLSSGRDKICVIWDLRSLQATRTVPVFESVEAAVLLPEEPAPELGVKSAGLHFLTAGDQGALRVWEAASGRCVHAQQRLRGPGRELTHCTLAHAAGLLLSVTADHNLLLYDARSLRLRKQFAGYSEEVLDVRFLGPEDSHVVVASNSPCLKVFDLQTSACQILHGHTDIVLALDVFRKGRLFASCAKDQSIRVWRMNKSGEVACVAQGSGHTHSVGTICCSRLKETFLVTGSQDCTVKLWPLPEALLSKGTGHEGGPVFLQAQATQHCHDKDINSVAVAPNDKLLATGSQDRTAKLWALPRCQLLGTFSGHRRGLWCVQFSPMDQVLATASADGTIKLWALQDFSCLKTFEGHDASVLKVAFVSRGTQLLSSGSDGLLKLWTIKNNECVRTLDAHEDKVWGLHCSRLDDRALTGASDSRVVLWKDVTEAEQAEEQAKREEQVVKQQELDNLLHEKRYLRALGLAISLDRPHTVLTVIQAIRRDPESCEKLETTVLQLRRDQKEALLRFCVTWNTNSRHCHEAQAVLGVLLRHEAPDELLTYDGVRASLEGLLPYTERHFQRLSRMLQAATFLDFLWHNMKLPALPTAPAAL</sequence>
<gene>
    <name type="primary">TBL3</name>
</gene>